<evidence type="ECO:0000250" key="1"/>
<evidence type="ECO:0000255" key="2">
    <source>
        <dbReference type="HAMAP-Rule" id="MF_00103"/>
    </source>
</evidence>
<proteinExistence type="inferred from homology"/>
<sequence>MPELPEVETTRRGIAPYLEGQRVERVIVRERRLRWPIPEDLDVRLSGQRIVSVERRAKYLLLGAEAGTLISHLGMSGSLRLVESGTPASRHEHVDIELASGMALRYTDPRRFGAMLWSLAPLEHELLRNLGPEPLTDAFAGQRLFELSRGRSMAVKPFIMDNAVVVGVGNIYASEALFAAGIDPRKPAGSISKARYLRLAEEIKRILAIAIERGGTTLRDFVGGDGQPGYFQQELFVYGRGGEFCKVCGSTLREIRLGQRASVYCPRCQR</sequence>
<protein>
    <recommendedName>
        <fullName evidence="2">Formamidopyrimidine-DNA glycosylase</fullName>
        <shortName evidence="2">Fapy-DNA glycosylase</shortName>
        <ecNumber evidence="2">3.2.2.23</ecNumber>
    </recommendedName>
    <alternativeName>
        <fullName evidence="2">DNA-(apurinic or apyrimidinic site) lyase MutM</fullName>
        <shortName evidence="2">AP lyase MutM</shortName>
        <ecNumber evidence="2">4.2.99.18</ecNumber>
    </alternativeName>
</protein>
<feature type="initiator methionine" description="Removed" evidence="1">
    <location>
        <position position="1"/>
    </location>
</feature>
<feature type="chain" id="PRO_1000117386" description="Formamidopyrimidine-DNA glycosylase">
    <location>
        <begin position="2"/>
        <end position="270"/>
    </location>
</feature>
<feature type="zinc finger region" description="FPG-type" evidence="2">
    <location>
        <begin position="236"/>
        <end position="270"/>
    </location>
</feature>
<feature type="active site" description="Schiff-base intermediate with DNA" evidence="2">
    <location>
        <position position="2"/>
    </location>
</feature>
<feature type="active site" description="Proton donor" evidence="2">
    <location>
        <position position="3"/>
    </location>
</feature>
<feature type="active site" description="Proton donor; for beta-elimination activity" evidence="2">
    <location>
        <position position="58"/>
    </location>
</feature>
<feature type="active site" description="Proton donor; for delta-elimination activity" evidence="2">
    <location>
        <position position="260"/>
    </location>
</feature>
<feature type="binding site" evidence="2">
    <location>
        <position position="91"/>
    </location>
    <ligand>
        <name>DNA</name>
        <dbReference type="ChEBI" id="CHEBI:16991"/>
    </ligand>
</feature>
<feature type="binding site" evidence="2">
    <location>
        <position position="110"/>
    </location>
    <ligand>
        <name>DNA</name>
        <dbReference type="ChEBI" id="CHEBI:16991"/>
    </ligand>
</feature>
<feature type="binding site" evidence="2">
    <location>
        <position position="151"/>
    </location>
    <ligand>
        <name>DNA</name>
        <dbReference type="ChEBI" id="CHEBI:16991"/>
    </ligand>
</feature>
<name>FPG_PSEA8</name>
<keyword id="KW-0227">DNA damage</keyword>
<keyword id="KW-0234">DNA repair</keyword>
<keyword id="KW-0238">DNA-binding</keyword>
<keyword id="KW-0326">Glycosidase</keyword>
<keyword id="KW-0378">Hydrolase</keyword>
<keyword id="KW-0456">Lyase</keyword>
<keyword id="KW-0479">Metal-binding</keyword>
<keyword id="KW-0511">Multifunctional enzyme</keyword>
<keyword id="KW-0862">Zinc</keyword>
<keyword id="KW-0863">Zinc-finger</keyword>
<comment type="function">
    <text evidence="2">Involved in base excision repair of DNA damaged by oxidation or by mutagenic agents. Acts as a DNA glycosylase that recognizes and removes damaged bases. Has a preference for oxidized purines, such as 7,8-dihydro-8-oxoguanine (8-oxoG). Has AP (apurinic/apyrimidinic) lyase activity and introduces nicks in the DNA strand. Cleaves the DNA backbone by beta-delta elimination to generate a single-strand break at the site of the removed base with both 3'- and 5'-phosphates.</text>
</comment>
<comment type="catalytic activity">
    <reaction evidence="2">
        <text>Hydrolysis of DNA containing ring-opened 7-methylguanine residues, releasing 2,6-diamino-4-hydroxy-5-(N-methyl)formamidopyrimidine.</text>
        <dbReference type="EC" id="3.2.2.23"/>
    </reaction>
</comment>
<comment type="catalytic activity">
    <reaction evidence="2">
        <text>2'-deoxyribonucleotide-(2'-deoxyribose 5'-phosphate)-2'-deoxyribonucleotide-DNA = a 3'-end 2'-deoxyribonucleotide-(2,3-dehydro-2,3-deoxyribose 5'-phosphate)-DNA + a 5'-end 5'-phospho-2'-deoxyribonucleoside-DNA + H(+)</text>
        <dbReference type="Rhea" id="RHEA:66592"/>
        <dbReference type="Rhea" id="RHEA-COMP:13180"/>
        <dbReference type="Rhea" id="RHEA-COMP:16897"/>
        <dbReference type="Rhea" id="RHEA-COMP:17067"/>
        <dbReference type="ChEBI" id="CHEBI:15378"/>
        <dbReference type="ChEBI" id="CHEBI:136412"/>
        <dbReference type="ChEBI" id="CHEBI:157695"/>
        <dbReference type="ChEBI" id="CHEBI:167181"/>
        <dbReference type="EC" id="4.2.99.18"/>
    </reaction>
</comment>
<comment type="cofactor">
    <cofactor evidence="2">
        <name>Zn(2+)</name>
        <dbReference type="ChEBI" id="CHEBI:29105"/>
    </cofactor>
    <text evidence="2">Binds 1 zinc ion per subunit.</text>
</comment>
<comment type="subunit">
    <text evidence="2">Monomer.</text>
</comment>
<comment type="similarity">
    <text evidence="2">Belongs to the FPG family.</text>
</comment>
<organism>
    <name type="scientific">Pseudomonas aeruginosa (strain LESB58)</name>
    <dbReference type="NCBI Taxonomy" id="557722"/>
    <lineage>
        <taxon>Bacteria</taxon>
        <taxon>Pseudomonadati</taxon>
        <taxon>Pseudomonadota</taxon>
        <taxon>Gammaproteobacteria</taxon>
        <taxon>Pseudomonadales</taxon>
        <taxon>Pseudomonadaceae</taxon>
        <taxon>Pseudomonas</taxon>
    </lineage>
</organism>
<gene>
    <name evidence="2" type="primary">mutM</name>
    <name evidence="2" type="synonym">fpg</name>
    <name type="ordered locus">PLES_03541</name>
</gene>
<dbReference type="EC" id="3.2.2.23" evidence="2"/>
<dbReference type="EC" id="4.2.99.18" evidence="2"/>
<dbReference type="EMBL" id="FM209186">
    <property type="protein sequence ID" value="CAW25081.1"/>
    <property type="molecule type" value="Genomic_DNA"/>
</dbReference>
<dbReference type="RefSeq" id="WP_003102876.1">
    <property type="nucleotide sequence ID" value="NC_011770.1"/>
</dbReference>
<dbReference type="SMR" id="B7V2S0"/>
<dbReference type="KEGG" id="pag:PLES_03541"/>
<dbReference type="HOGENOM" id="CLU_038423_1_1_6"/>
<dbReference type="GO" id="GO:0034039">
    <property type="term" value="F:8-oxo-7,8-dihydroguanine DNA N-glycosylase activity"/>
    <property type="evidence" value="ECO:0007669"/>
    <property type="project" value="TreeGrafter"/>
</dbReference>
<dbReference type="GO" id="GO:0140078">
    <property type="term" value="F:class I DNA-(apurinic or apyrimidinic site) endonuclease activity"/>
    <property type="evidence" value="ECO:0007669"/>
    <property type="project" value="UniProtKB-EC"/>
</dbReference>
<dbReference type="GO" id="GO:0003684">
    <property type="term" value="F:damaged DNA binding"/>
    <property type="evidence" value="ECO:0007669"/>
    <property type="project" value="InterPro"/>
</dbReference>
<dbReference type="GO" id="GO:0008270">
    <property type="term" value="F:zinc ion binding"/>
    <property type="evidence" value="ECO:0007669"/>
    <property type="project" value="UniProtKB-UniRule"/>
</dbReference>
<dbReference type="GO" id="GO:0006284">
    <property type="term" value="P:base-excision repair"/>
    <property type="evidence" value="ECO:0007669"/>
    <property type="project" value="InterPro"/>
</dbReference>
<dbReference type="CDD" id="cd08966">
    <property type="entry name" value="EcFpg-like_N"/>
    <property type="match status" value="1"/>
</dbReference>
<dbReference type="FunFam" id="1.10.8.50:FF:000003">
    <property type="entry name" value="Formamidopyrimidine-DNA glycosylase"/>
    <property type="match status" value="1"/>
</dbReference>
<dbReference type="FunFam" id="3.20.190.10:FF:000001">
    <property type="entry name" value="Formamidopyrimidine-DNA glycosylase"/>
    <property type="match status" value="1"/>
</dbReference>
<dbReference type="Gene3D" id="1.10.8.50">
    <property type="match status" value="1"/>
</dbReference>
<dbReference type="Gene3D" id="3.20.190.10">
    <property type="entry name" value="MutM-like, N-terminal"/>
    <property type="match status" value="1"/>
</dbReference>
<dbReference type="HAMAP" id="MF_00103">
    <property type="entry name" value="Fapy_DNA_glycosyl"/>
    <property type="match status" value="1"/>
</dbReference>
<dbReference type="InterPro" id="IPR015886">
    <property type="entry name" value="DNA_glyclase/AP_lyase_DNA-bd"/>
</dbReference>
<dbReference type="InterPro" id="IPR015887">
    <property type="entry name" value="DNA_glyclase_Znf_dom_DNA_BS"/>
</dbReference>
<dbReference type="InterPro" id="IPR020629">
    <property type="entry name" value="Formamido-pyr_DNA_Glyclase"/>
</dbReference>
<dbReference type="InterPro" id="IPR012319">
    <property type="entry name" value="FPG_cat"/>
</dbReference>
<dbReference type="InterPro" id="IPR035937">
    <property type="entry name" value="MutM-like_N-ter"/>
</dbReference>
<dbReference type="InterPro" id="IPR010979">
    <property type="entry name" value="Ribosomal_uS13-like_H2TH"/>
</dbReference>
<dbReference type="InterPro" id="IPR000214">
    <property type="entry name" value="Znf_DNA_glyclase/AP_lyase"/>
</dbReference>
<dbReference type="InterPro" id="IPR010663">
    <property type="entry name" value="Znf_FPG/IleRS"/>
</dbReference>
<dbReference type="NCBIfam" id="TIGR00577">
    <property type="entry name" value="fpg"/>
    <property type="match status" value="1"/>
</dbReference>
<dbReference type="NCBIfam" id="NF002211">
    <property type="entry name" value="PRK01103.1"/>
    <property type="match status" value="1"/>
</dbReference>
<dbReference type="PANTHER" id="PTHR22993">
    <property type="entry name" value="FORMAMIDOPYRIMIDINE-DNA GLYCOSYLASE"/>
    <property type="match status" value="1"/>
</dbReference>
<dbReference type="PANTHER" id="PTHR22993:SF9">
    <property type="entry name" value="FORMAMIDOPYRIMIDINE-DNA GLYCOSYLASE"/>
    <property type="match status" value="1"/>
</dbReference>
<dbReference type="Pfam" id="PF01149">
    <property type="entry name" value="Fapy_DNA_glyco"/>
    <property type="match status" value="1"/>
</dbReference>
<dbReference type="Pfam" id="PF06831">
    <property type="entry name" value="H2TH"/>
    <property type="match status" value="1"/>
</dbReference>
<dbReference type="Pfam" id="PF06827">
    <property type="entry name" value="zf-FPG_IleRS"/>
    <property type="match status" value="1"/>
</dbReference>
<dbReference type="SMART" id="SM00898">
    <property type="entry name" value="Fapy_DNA_glyco"/>
    <property type="match status" value="1"/>
</dbReference>
<dbReference type="SMART" id="SM01232">
    <property type="entry name" value="H2TH"/>
    <property type="match status" value="1"/>
</dbReference>
<dbReference type="SUPFAM" id="SSF57716">
    <property type="entry name" value="Glucocorticoid receptor-like (DNA-binding domain)"/>
    <property type="match status" value="1"/>
</dbReference>
<dbReference type="SUPFAM" id="SSF81624">
    <property type="entry name" value="N-terminal domain of MutM-like DNA repair proteins"/>
    <property type="match status" value="1"/>
</dbReference>
<dbReference type="SUPFAM" id="SSF46946">
    <property type="entry name" value="S13-like H2TH domain"/>
    <property type="match status" value="1"/>
</dbReference>
<dbReference type="PROSITE" id="PS51068">
    <property type="entry name" value="FPG_CAT"/>
    <property type="match status" value="1"/>
</dbReference>
<dbReference type="PROSITE" id="PS01242">
    <property type="entry name" value="ZF_FPG_1"/>
    <property type="match status" value="1"/>
</dbReference>
<dbReference type="PROSITE" id="PS51066">
    <property type="entry name" value="ZF_FPG_2"/>
    <property type="match status" value="1"/>
</dbReference>
<reference key="1">
    <citation type="journal article" date="2009" name="Genome Res.">
        <title>Newly introduced genomic prophage islands are critical determinants of in vivo competitiveness in the Liverpool epidemic strain of Pseudomonas aeruginosa.</title>
        <authorList>
            <person name="Winstanley C."/>
            <person name="Langille M.G.I."/>
            <person name="Fothergill J.L."/>
            <person name="Kukavica-Ibrulj I."/>
            <person name="Paradis-Bleau C."/>
            <person name="Sanschagrin F."/>
            <person name="Thomson N.R."/>
            <person name="Winsor G.L."/>
            <person name="Quail M.A."/>
            <person name="Lennard N."/>
            <person name="Bignell A."/>
            <person name="Clarke L."/>
            <person name="Seeger K."/>
            <person name="Saunders D."/>
            <person name="Harris D."/>
            <person name="Parkhill J."/>
            <person name="Hancock R.E.W."/>
            <person name="Brinkman F.S.L."/>
            <person name="Levesque R.C."/>
        </authorList>
    </citation>
    <scope>NUCLEOTIDE SEQUENCE [LARGE SCALE GENOMIC DNA]</scope>
    <source>
        <strain>LESB58</strain>
    </source>
</reference>
<accession>B7V2S0</accession>